<feature type="chain" id="PRO_0000057705" description="Arabinogalactan endo-beta-1,4-galactanase">
    <location>
        <begin position="1"/>
        <end position="332"/>
    </location>
</feature>
<feature type="active site" description="Proton donor" evidence="1">
    <location>
        <position position="135"/>
    </location>
</feature>
<feature type="active site" description="Nucleophile" evidence="1">
    <location>
        <position position="245"/>
    </location>
</feature>
<feature type="glycosylation site" description="N-linked (GlcNAc...) asparagine" evidence="2">
    <location>
        <position position="111"/>
    </location>
</feature>
<feature type="strand" evidence="5">
    <location>
        <begin position="3"/>
        <end position="8"/>
    </location>
</feature>
<feature type="helix" evidence="5">
    <location>
        <begin position="12"/>
        <end position="17"/>
    </location>
</feature>
<feature type="helix" evidence="5">
    <location>
        <begin position="32"/>
        <end position="38"/>
    </location>
</feature>
<feature type="strand" evidence="5">
    <location>
        <begin position="43"/>
        <end position="48"/>
    </location>
</feature>
<feature type="helix" evidence="5">
    <location>
        <begin position="59"/>
        <end position="71"/>
    </location>
</feature>
<feature type="strand" evidence="5">
    <location>
        <begin position="75"/>
        <end position="80"/>
    </location>
</feature>
<feature type="strand" evidence="5">
    <location>
        <begin position="83"/>
        <end position="85"/>
    </location>
</feature>
<feature type="helix" evidence="5">
    <location>
        <begin position="102"/>
        <end position="123"/>
    </location>
</feature>
<feature type="strand" evidence="5">
    <location>
        <begin position="129"/>
        <end position="135"/>
    </location>
</feature>
<feature type="strand" evidence="5">
    <location>
        <begin position="139"/>
        <end position="142"/>
    </location>
</feature>
<feature type="turn" evidence="5">
    <location>
        <begin position="143"/>
        <end position="145"/>
    </location>
</feature>
<feature type="helix" evidence="5">
    <location>
        <begin position="150"/>
        <end position="165"/>
    </location>
</feature>
<feature type="strand" evidence="5">
    <location>
        <begin position="174"/>
        <end position="180"/>
    </location>
</feature>
<feature type="helix" evidence="5">
    <location>
        <begin position="185"/>
        <end position="198"/>
    </location>
</feature>
<feature type="strand" evidence="5">
    <location>
        <begin position="199"/>
        <end position="201"/>
    </location>
</feature>
<feature type="helix" evidence="5">
    <location>
        <begin position="203"/>
        <end position="205"/>
    </location>
</feature>
<feature type="strand" evidence="5">
    <location>
        <begin position="208"/>
        <end position="212"/>
    </location>
</feature>
<feature type="helix" evidence="5">
    <location>
        <begin position="223"/>
        <end position="237"/>
    </location>
</feature>
<feature type="strand" evidence="5">
    <location>
        <begin position="240"/>
        <end position="245"/>
    </location>
</feature>
<feature type="helix" evidence="5">
    <location>
        <begin position="261"/>
        <end position="263"/>
    </location>
</feature>
<feature type="helix" evidence="5">
    <location>
        <begin position="270"/>
        <end position="286"/>
    </location>
</feature>
<feature type="strand" evidence="5">
    <location>
        <begin position="290"/>
        <end position="296"/>
    </location>
</feature>
<feature type="helix" evidence="5">
    <location>
        <begin position="301"/>
        <end position="303"/>
    </location>
</feature>
<feature type="turn" evidence="5">
    <location>
        <begin position="304"/>
        <end position="307"/>
    </location>
</feature>
<feature type="strand" evidence="5">
    <location>
        <begin position="308"/>
        <end position="312"/>
    </location>
</feature>
<feature type="strand" evidence="5">
    <location>
        <begin position="320"/>
        <end position="322"/>
    </location>
</feature>
<feature type="helix" evidence="5">
    <location>
        <begin position="324"/>
        <end position="327"/>
    </location>
</feature>
<feature type="helix" evidence="5">
    <location>
        <begin position="328"/>
        <end position="331"/>
    </location>
</feature>
<sequence length="332" mass="37659">ALQYKGVDWSSVMVEERAGVRYKNVNGQEKPLEYILAENGVNMVRQRVWVNPWDGNYNLDYNIQLARRAKAAGLGLYINFHYSDTWADPAHQTTPAGWPSDINNLAWKLYNYTLDSMNRFADAGIQVDIVSIGNEITQGLLWPLGKTNNWYNIARLLHSAAWGVKDSRLNPKPKIMVHLDNGWNWDTQNWWYTNVLSQGPFEMSDFDMMGVSFYPFYSASATLDSLRRSLNNMVSRWGKEVAVVETNWPTSCPYPRYQFPADVRNVPFSAAGQTQYIQSVANVVSSVSKGVGLFYWEPAWIHNANLGSSCADNTMFTPSGQALSSLSVFHRI</sequence>
<accession>P83691</accession>
<keyword id="KW-0002">3D-structure</keyword>
<keyword id="KW-0325">Glycoprotein</keyword>
<keyword id="KW-0326">Glycosidase</keyword>
<keyword id="KW-0378">Hydrolase</keyword>
<proteinExistence type="evidence at protein level"/>
<name>GANA_HUMIN</name>
<dbReference type="EC" id="3.2.1.89"/>
<dbReference type="PDB" id="1HJQ">
    <property type="method" value="X-ray"/>
    <property type="resolution" value="2.55 A"/>
    <property type="chains" value="A=1-332"/>
</dbReference>
<dbReference type="PDBsum" id="1HJQ"/>
<dbReference type="SMR" id="P83691"/>
<dbReference type="CAZy" id="GH53">
    <property type="family name" value="Glycoside Hydrolase Family 53"/>
</dbReference>
<dbReference type="iPTMnet" id="P83691"/>
<dbReference type="EvolutionaryTrace" id="P83691"/>
<dbReference type="GO" id="GO:0031218">
    <property type="term" value="F:arabinogalactan endo-1,4-beta-galactosidase activity"/>
    <property type="evidence" value="ECO:0007669"/>
    <property type="project" value="UniProtKB-EC"/>
</dbReference>
<dbReference type="GO" id="GO:0015926">
    <property type="term" value="F:glucosidase activity"/>
    <property type="evidence" value="ECO:0007669"/>
    <property type="project" value="InterPro"/>
</dbReference>
<dbReference type="GO" id="GO:0004553">
    <property type="term" value="F:hydrolase activity, hydrolyzing O-glycosyl compounds"/>
    <property type="evidence" value="ECO:0000314"/>
    <property type="project" value="UniProtKB"/>
</dbReference>
<dbReference type="GO" id="GO:0030247">
    <property type="term" value="F:polysaccharide binding"/>
    <property type="evidence" value="ECO:0000314"/>
    <property type="project" value="UniProtKB"/>
</dbReference>
<dbReference type="GO" id="GO:0016998">
    <property type="term" value="P:cell wall macromolecule catabolic process"/>
    <property type="evidence" value="ECO:0000304"/>
    <property type="project" value="UniProtKB"/>
</dbReference>
<dbReference type="GO" id="GO:0045490">
    <property type="term" value="P:pectin catabolic process"/>
    <property type="evidence" value="ECO:0007669"/>
    <property type="project" value="TreeGrafter"/>
</dbReference>
<dbReference type="FunFam" id="3.20.20.80:FF:000077">
    <property type="entry name" value="Arabinogalactan endo-beta-1,4-galactanase"/>
    <property type="match status" value="1"/>
</dbReference>
<dbReference type="Gene3D" id="3.20.20.80">
    <property type="entry name" value="Glycosidases"/>
    <property type="match status" value="1"/>
</dbReference>
<dbReference type="InterPro" id="IPR011683">
    <property type="entry name" value="Glyco_hydro_53"/>
</dbReference>
<dbReference type="InterPro" id="IPR017853">
    <property type="entry name" value="Glycoside_hydrolase_SF"/>
</dbReference>
<dbReference type="PANTHER" id="PTHR34983">
    <property type="entry name" value="ARABINOGALACTAN ENDO-BETA-1,4-GALACTANASE A"/>
    <property type="match status" value="1"/>
</dbReference>
<dbReference type="PANTHER" id="PTHR34983:SF1">
    <property type="entry name" value="ARABINOGALACTAN ENDO-BETA-1,4-GALACTANASE A"/>
    <property type="match status" value="1"/>
</dbReference>
<dbReference type="Pfam" id="PF07745">
    <property type="entry name" value="Glyco_hydro_53"/>
    <property type="match status" value="1"/>
</dbReference>
<dbReference type="SUPFAM" id="SSF51445">
    <property type="entry name" value="(Trans)glycosidases"/>
    <property type="match status" value="1"/>
</dbReference>
<comment type="catalytic activity">
    <reaction evidence="2">
        <text>The enzyme specifically hydrolyzes (1-&gt;4)-beta-D-galactosidic linkages in type I arabinogalactans.</text>
        <dbReference type="EC" id="3.2.1.89"/>
    </reaction>
</comment>
<comment type="miscellaneous">
    <text evidence="2">Has a pH range of 6.5-9.5 with optimum of 8.5; and a temperature optimum of 65 degrees Celsius at pH 6.5.</text>
</comment>
<comment type="similarity">
    <text evidence="2">Belongs to the glycosyl hydrolase 53 family.</text>
</comment>
<protein>
    <recommendedName>
        <fullName>Arabinogalactan endo-beta-1,4-galactanase</fullName>
        <ecNumber>3.2.1.89</ecNumber>
    </recommendedName>
    <alternativeName>
        <fullName>Endo-1,4-beta-galactanase</fullName>
        <shortName>Galactanase</shortName>
    </alternativeName>
</protein>
<organism>
    <name type="scientific">Humicola insolens</name>
    <name type="common">Soft-rot fungus</name>
    <dbReference type="NCBI Taxonomy" id="85995"/>
    <lineage>
        <taxon>Eukaryota</taxon>
        <taxon>Fungi</taxon>
        <taxon>Dikarya</taxon>
        <taxon>Ascomycota</taxon>
        <taxon>Pezizomycotina</taxon>
        <taxon>Sordariomycetes</taxon>
        <taxon>Sordariomycetidae</taxon>
        <taxon>Sordariales</taxon>
        <taxon>Chaetomiaceae</taxon>
        <taxon>Mycothermus</taxon>
    </lineage>
</organism>
<reference evidence="3 4" key="1">
    <citation type="journal article" date="2003" name="Protein Sci.">
        <title>Structure of two fungal beta-1,4-galactanases: searching for the basis for temperature and pH optimum.</title>
        <authorList>
            <person name="Le Nours J."/>
            <person name="Ryttersgaard C."/>
            <person name="Lo Leggio L."/>
            <person name="Oestergaard P.R."/>
            <person name="Borchert T.V."/>
            <person name="Christensen L.L.H."/>
            <person name="Larsen S."/>
        </authorList>
    </citation>
    <scope>X-RAY CRYSTALLOGRAPHY (2.6 ANGSTROMS)</scope>
    <scope>CATALYTIC ACTIVITY</scope>
    <scope>GLYCOSYLATION AT ASN-111</scope>
</reference>
<evidence type="ECO:0000250" key="1">
    <source>
        <dbReference type="UniProtKB" id="P48841"/>
    </source>
</evidence>
<evidence type="ECO:0000269" key="2">
    <source>
    </source>
</evidence>
<evidence type="ECO:0000305" key="3"/>
<evidence type="ECO:0000312" key="4">
    <source>
        <dbReference type="PDB" id="1HJQ"/>
    </source>
</evidence>
<evidence type="ECO:0007829" key="5">
    <source>
        <dbReference type="PDB" id="1HJQ"/>
    </source>
</evidence>